<organism>
    <name type="scientific">Bacillus cereus (strain AH187)</name>
    <dbReference type="NCBI Taxonomy" id="405534"/>
    <lineage>
        <taxon>Bacteria</taxon>
        <taxon>Bacillati</taxon>
        <taxon>Bacillota</taxon>
        <taxon>Bacilli</taxon>
        <taxon>Bacillales</taxon>
        <taxon>Bacillaceae</taxon>
        <taxon>Bacillus</taxon>
        <taxon>Bacillus cereus group</taxon>
    </lineage>
</organism>
<proteinExistence type="inferred from homology"/>
<name>Y3092_BACC7</name>
<protein>
    <recommendedName>
        <fullName evidence="1">UPF0178 protein BCAH187_A3092</fullName>
    </recommendedName>
</protein>
<accession>B7HVS1</accession>
<dbReference type="EMBL" id="CP001177">
    <property type="protein sequence ID" value="ACJ79014.1"/>
    <property type="molecule type" value="Genomic_DNA"/>
</dbReference>
<dbReference type="SMR" id="B7HVS1"/>
<dbReference type="KEGG" id="bcr:BCAH187_A3092"/>
<dbReference type="HOGENOM" id="CLU_106619_0_0_9"/>
<dbReference type="Proteomes" id="UP000002214">
    <property type="component" value="Chromosome"/>
</dbReference>
<dbReference type="HAMAP" id="MF_00489">
    <property type="entry name" value="UPF0178"/>
    <property type="match status" value="1"/>
</dbReference>
<dbReference type="InterPro" id="IPR003791">
    <property type="entry name" value="UPF0178"/>
</dbReference>
<dbReference type="NCBIfam" id="NF001095">
    <property type="entry name" value="PRK00124.1"/>
    <property type="match status" value="1"/>
</dbReference>
<dbReference type="PANTHER" id="PTHR35146">
    <property type="entry name" value="UPF0178 PROTEIN YAII"/>
    <property type="match status" value="1"/>
</dbReference>
<dbReference type="PANTHER" id="PTHR35146:SF1">
    <property type="entry name" value="UPF0178 PROTEIN YAII"/>
    <property type="match status" value="1"/>
</dbReference>
<dbReference type="Pfam" id="PF02639">
    <property type="entry name" value="DUF188"/>
    <property type="match status" value="1"/>
</dbReference>
<sequence>MKIYVDADACPVKDVIIFEATKAEIPVTLVTSFSHYSNAEQPKGVETIYVDSGADAADYRIMQLAQKEDLIITQDYGLASLALAKGCIVLHHKGYKYTNDNIEQLLQTRYLSAMVRKSGKRTKGPKPFTAEDKEKFRALFKSFIAR</sequence>
<gene>
    <name type="ordered locus">BCAH187_A3092</name>
</gene>
<reference key="1">
    <citation type="submission" date="2008-10" db="EMBL/GenBank/DDBJ databases">
        <title>Genome sequence of Bacillus cereus AH187.</title>
        <authorList>
            <person name="Dodson R.J."/>
            <person name="Durkin A.S."/>
            <person name="Rosovitz M.J."/>
            <person name="Rasko D.A."/>
            <person name="Kolsto A.B."/>
            <person name="Okstad O.A."/>
            <person name="Ravel J."/>
            <person name="Sutton G."/>
        </authorList>
    </citation>
    <scope>NUCLEOTIDE SEQUENCE [LARGE SCALE GENOMIC DNA]</scope>
    <source>
        <strain>AH187</strain>
    </source>
</reference>
<comment type="similarity">
    <text evidence="1">Belongs to the UPF0178 family.</text>
</comment>
<evidence type="ECO:0000255" key="1">
    <source>
        <dbReference type="HAMAP-Rule" id="MF_00489"/>
    </source>
</evidence>
<feature type="chain" id="PRO_1000126175" description="UPF0178 protein BCAH187_A3092">
    <location>
        <begin position="1"/>
        <end position="146"/>
    </location>
</feature>